<feature type="chain" id="PRO_0000265158" description="RNA-binding protein Hfq">
    <location>
        <begin position="1"/>
        <end position="109"/>
    </location>
</feature>
<feature type="domain" description="Sm" evidence="2">
    <location>
        <begin position="9"/>
        <end position="68"/>
    </location>
</feature>
<feature type="region of interest" description="Disordered" evidence="3">
    <location>
        <begin position="77"/>
        <end position="109"/>
    </location>
</feature>
<organism>
    <name type="scientific">Francisella tularensis subsp. tularensis (strain FSC 198)</name>
    <dbReference type="NCBI Taxonomy" id="393115"/>
    <lineage>
        <taxon>Bacteria</taxon>
        <taxon>Pseudomonadati</taxon>
        <taxon>Pseudomonadota</taxon>
        <taxon>Gammaproteobacteria</taxon>
        <taxon>Thiotrichales</taxon>
        <taxon>Francisellaceae</taxon>
        <taxon>Francisella</taxon>
    </lineage>
</organism>
<protein>
    <recommendedName>
        <fullName evidence="1">RNA-binding protein Hfq</fullName>
    </recommendedName>
</protein>
<sequence>MSRISSLQDPFLNALRKEKVSVSVYLVNGIKLQGQVEAFDQFCIVLRNTVNQMVYKHAISTIVPAKSVRMIYNSFNPYHQNSNDEQDENVDDIHSDDLEIQENEGNIHE</sequence>
<comment type="function">
    <text evidence="1">RNA chaperone that binds small regulatory RNA (sRNAs) and mRNAs to facilitate mRNA translational regulation in response to envelope stress, environmental stress and changes in metabolite concentrations. Also binds with high specificity to tRNAs.</text>
</comment>
<comment type="subunit">
    <text evidence="1">Homohexamer.</text>
</comment>
<comment type="similarity">
    <text evidence="1">Belongs to the Hfq family.</text>
</comment>
<accession>Q14IJ3</accession>
<gene>
    <name evidence="1" type="primary">hfq</name>
    <name type="ordered locus">FTF0630</name>
</gene>
<name>HFQ_FRAT1</name>
<reference key="1">
    <citation type="journal article" date="2007" name="PLoS ONE">
        <title>Genome sequencing shows that European isolates of Francisella tularensis subspecies tularensis are almost identical to US laboratory strain Schu S4.</title>
        <authorList>
            <person name="Chaudhuri R.R."/>
            <person name="Ren C.-P."/>
            <person name="Desmond L."/>
            <person name="Vincent G.A."/>
            <person name="Silman N.J."/>
            <person name="Brehm J.K."/>
            <person name="Elmore M.J."/>
            <person name="Hudson M.J."/>
            <person name="Forsman M."/>
            <person name="Isherwood K.E."/>
            <person name="Gurycova D."/>
            <person name="Minton N.P."/>
            <person name="Titball R.W."/>
            <person name="Pallen M.J."/>
            <person name="Vipond R."/>
        </authorList>
    </citation>
    <scope>NUCLEOTIDE SEQUENCE [LARGE SCALE GENOMIC DNA]</scope>
    <source>
        <strain>FSC 198</strain>
    </source>
</reference>
<evidence type="ECO:0000255" key="1">
    <source>
        <dbReference type="HAMAP-Rule" id="MF_00436"/>
    </source>
</evidence>
<evidence type="ECO:0000255" key="2">
    <source>
        <dbReference type="PROSITE-ProRule" id="PRU01346"/>
    </source>
</evidence>
<evidence type="ECO:0000256" key="3">
    <source>
        <dbReference type="SAM" id="MobiDB-lite"/>
    </source>
</evidence>
<proteinExistence type="inferred from homology"/>
<dbReference type="EMBL" id="AM286280">
    <property type="protein sequence ID" value="CAL08646.1"/>
    <property type="molecule type" value="Genomic_DNA"/>
</dbReference>
<dbReference type="RefSeq" id="WP_003020370.1">
    <property type="nucleotide sequence ID" value="NC_008245.1"/>
</dbReference>
<dbReference type="SMR" id="Q14IJ3"/>
<dbReference type="KEGG" id="ftf:FTF0630"/>
<dbReference type="HOGENOM" id="CLU_113688_2_2_6"/>
<dbReference type="GO" id="GO:0005829">
    <property type="term" value="C:cytosol"/>
    <property type="evidence" value="ECO:0007669"/>
    <property type="project" value="TreeGrafter"/>
</dbReference>
<dbReference type="GO" id="GO:0003723">
    <property type="term" value="F:RNA binding"/>
    <property type="evidence" value="ECO:0007669"/>
    <property type="project" value="UniProtKB-UniRule"/>
</dbReference>
<dbReference type="GO" id="GO:0006355">
    <property type="term" value="P:regulation of DNA-templated transcription"/>
    <property type="evidence" value="ECO:0007669"/>
    <property type="project" value="InterPro"/>
</dbReference>
<dbReference type="GO" id="GO:0043487">
    <property type="term" value="P:regulation of RNA stability"/>
    <property type="evidence" value="ECO:0007669"/>
    <property type="project" value="TreeGrafter"/>
</dbReference>
<dbReference type="GO" id="GO:0045974">
    <property type="term" value="P:regulation of translation, ncRNA-mediated"/>
    <property type="evidence" value="ECO:0007669"/>
    <property type="project" value="TreeGrafter"/>
</dbReference>
<dbReference type="CDD" id="cd01716">
    <property type="entry name" value="Hfq"/>
    <property type="match status" value="1"/>
</dbReference>
<dbReference type="FunFam" id="2.30.30.100:FF:000001">
    <property type="entry name" value="RNA-binding protein Hfq"/>
    <property type="match status" value="1"/>
</dbReference>
<dbReference type="Gene3D" id="2.30.30.100">
    <property type="match status" value="1"/>
</dbReference>
<dbReference type="HAMAP" id="MF_00436">
    <property type="entry name" value="Hfq"/>
    <property type="match status" value="1"/>
</dbReference>
<dbReference type="InterPro" id="IPR005001">
    <property type="entry name" value="Hfq"/>
</dbReference>
<dbReference type="InterPro" id="IPR010920">
    <property type="entry name" value="LSM_dom_sf"/>
</dbReference>
<dbReference type="InterPro" id="IPR047575">
    <property type="entry name" value="Sm"/>
</dbReference>
<dbReference type="NCBIfam" id="TIGR02383">
    <property type="entry name" value="Hfq"/>
    <property type="match status" value="1"/>
</dbReference>
<dbReference type="NCBIfam" id="NF001602">
    <property type="entry name" value="PRK00395.1"/>
    <property type="match status" value="1"/>
</dbReference>
<dbReference type="PANTHER" id="PTHR34772">
    <property type="entry name" value="RNA-BINDING PROTEIN HFQ"/>
    <property type="match status" value="1"/>
</dbReference>
<dbReference type="PANTHER" id="PTHR34772:SF1">
    <property type="entry name" value="RNA-BINDING PROTEIN HFQ"/>
    <property type="match status" value="1"/>
</dbReference>
<dbReference type="Pfam" id="PF17209">
    <property type="entry name" value="Hfq"/>
    <property type="match status" value="1"/>
</dbReference>
<dbReference type="SUPFAM" id="SSF50182">
    <property type="entry name" value="Sm-like ribonucleoproteins"/>
    <property type="match status" value="1"/>
</dbReference>
<dbReference type="PROSITE" id="PS52002">
    <property type="entry name" value="SM"/>
    <property type="match status" value="1"/>
</dbReference>
<keyword id="KW-0694">RNA-binding</keyword>
<keyword id="KW-0346">Stress response</keyword>